<keyword id="KW-0004">4Fe-4S</keyword>
<keyword id="KW-0963">Cytoplasm</keyword>
<keyword id="KW-1015">Disulfide bond</keyword>
<keyword id="KW-0408">Iron</keyword>
<keyword id="KW-0411">Iron-sulfur</keyword>
<keyword id="KW-0479">Metal-binding</keyword>
<keyword id="KW-0489">Methyltransferase</keyword>
<keyword id="KW-1185">Reference proteome</keyword>
<keyword id="KW-0698">rRNA processing</keyword>
<keyword id="KW-0949">S-adenosyl-L-methionine</keyword>
<keyword id="KW-0808">Transferase</keyword>
<keyword id="KW-0819">tRNA processing</keyword>
<evidence type="ECO:0000255" key="1">
    <source>
        <dbReference type="HAMAP-Rule" id="MF_01849"/>
    </source>
</evidence>
<evidence type="ECO:0000255" key="2">
    <source>
        <dbReference type="PROSITE-ProRule" id="PRU01266"/>
    </source>
</evidence>
<comment type="function">
    <text evidence="1">Specifically methylates position 2 of adenine 2503 in 23S rRNA and position 2 of adenine 37 in tRNAs. m2A2503 modification seems to play a crucial role in the proofreading step occurring at the peptidyl transferase center and thus would serve to optimize ribosomal fidelity.</text>
</comment>
<comment type="catalytic activity">
    <reaction evidence="1">
        <text>adenosine(2503) in 23S rRNA + 2 reduced [2Fe-2S]-[ferredoxin] + 2 S-adenosyl-L-methionine = 2-methyladenosine(2503) in 23S rRNA + 5'-deoxyadenosine + L-methionine + 2 oxidized [2Fe-2S]-[ferredoxin] + S-adenosyl-L-homocysteine</text>
        <dbReference type="Rhea" id="RHEA:42916"/>
        <dbReference type="Rhea" id="RHEA-COMP:10000"/>
        <dbReference type="Rhea" id="RHEA-COMP:10001"/>
        <dbReference type="Rhea" id="RHEA-COMP:10152"/>
        <dbReference type="Rhea" id="RHEA-COMP:10282"/>
        <dbReference type="ChEBI" id="CHEBI:17319"/>
        <dbReference type="ChEBI" id="CHEBI:33737"/>
        <dbReference type="ChEBI" id="CHEBI:33738"/>
        <dbReference type="ChEBI" id="CHEBI:57844"/>
        <dbReference type="ChEBI" id="CHEBI:57856"/>
        <dbReference type="ChEBI" id="CHEBI:59789"/>
        <dbReference type="ChEBI" id="CHEBI:74411"/>
        <dbReference type="ChEBI" id="CHEBI:74497"/>
        <dbReference type="EC" id="2.1.1.192"/>
    </reaction>
</comment>
<comment type="catalytic activity">
    <reaction evidence="1">
        <text>adenosine(37) in tRNA + 2 reduced [2Fe-2S]-[ferredoxin] + 2 S-adenosyl-L-methionine = 2-methyladenosine(37) in tRNA + 5'-deoxyadenosine + L-methionine + 2 oxidized [2Fe-2S]-[ferredoxin] + S-adenosyl-L-homocysteine</text>
        <dbReference type="Rhea" id="RHEA:43332"/>
        <dbReference type="Rhea" id="RHEA-COMP:10000"/>
        <dbReference type="Rhea" id="RHEA-COMP:10001"/>
        <dbReference type="Rhea" id="RHEA-COMP:10162"/>
        <dbReference type="Rhea" id="RHEA-COMP:10485"/>
        <dbReference type="ChEBI" id="CHEBI:17319"/>
        <dbReference type="ChEBI" id="CHEBI:33737"/>
        <dbReference type="ChEBI" id="CHEBI:33738"/>
        <dbReference type="ChEBI" id="CHEBI:57844"/>
        <dbReference type="ChEBI" id="CHEBI:57856"/>
        <dbReference type="ChEBI" id="CHEBI:59789"/>
        <dbReference type="ChEBI" id="CHEBI:74411"/>
        <dbReference type="ChEBI" id="CHEBI:74497"/>
        <dbReference type="EC" id="2.1.1.192"/>
    </reaction>
</comment>
<comment type="cofactor">
    <cofactor evidence="1">
        <name>[4Fe-4S] cluster</name>
        <dbReference type="ChEBI" id="CHEBI:49883"/>
    </cofactor>
    <text evidence="1">Binds 1 [4Fe-4S] cluster. The cluster is coordinated with 3 cysteines and an exchangeable S-adenosyl-L-methionine.</text>
</comment>
<comment type="subcellular location">
    <subcellularLocation>
        <location evidence="1">Cytoplasm</location>
    </subcellularLocation>
</comment>
<comment type="miscellaneous">
    <text evidence="1">Reaction proceeds by a ping-pong mechanism involving intermediate methylation of a conserved cysteine residue.</text>
</comment>
<comment type="similarity">
    <text evidence="1">Belongs to the radical SAM superfamily. RlmN family.</text>
</comment>
<proteinExistence type="inferred from homology"/>
<reference key="1">
    <citation type="journal article" date="2001" name="Proc. Natl. Acad. Sci. U.S.A.">
        <title>Analysis of the chromosome sequence of the legume symbiont Sinorhizobium meliloti strain 1021.</title>
        <authorList>
            <person name="Capela D."/>
            <person name="Barloy-Hubler F."/>
            <person name="Gouzy J."/>
            <person name="Bothe G."/>
            <person name="Ampe F."/>
            <person name="Batut J."/>
            <person name="Boistard P."/>
            <person name="Becker A."/>
            <person name="Boutry M."/>
            <person name="Cadieu E."/>
            <person name="Dreano S."/>
            <person name="Gloux S."/>
            <person name="Godrie T."/>
            <person name="Goffeau A."/>
            <person name="Kahn D."/>
            <person name="Kiss E."/>
            <person name="Lelaure V."/>
            <person name="Masuy D."/>
            <person name="Pohl T."/>
            <person name="Portetelle D."/>
            <person name="Puehler A."/>
            <person name="Purnelle B."/>
            <person name="Ramsperger U."/>
            <person name="Renard C."/>
            <person name="Thebault P."/>
            <person name="Vandenbol M."/>
            <person name="Weidner S."/>
            <person name="Galibert F."/>
        </authorList>
    </citation>
    <scope>NUCLEOTIDE SEQUENCE [LARGE SCALE GENOMIC DNA]</scope>
    <source>
        <strain>1021</strain>
    </source>
</reference>
<reference key="2">
    <citation type="journal article" date="2001" name="Science">
        <title>The composite genome of the legume symbiont Sinorhizobium meliloti.</title>
        <authorList>
            <person name="Galibert F."/>
            <person name="Finan T.M."/>
            <person name="Long S.R."/>
            <person name="Puehler A."/>
            <person name="Abola P."/>
            <person name="Ampe F."/>
            <person name="Barloy-Hubler F."/>
            <person name="Barnett M.J."/>
            <person name="Becker A."/>
            <person name="Boistard P."/>
            <person name="Bothe G."/>
            <person name="Boutry M."/>
            <person name="Bowser L."/>
            <person name="Buhrmester J."/>
            <person name="Cadieu E."/>
            <person name="Capela D."/>
            <person name="Chain P."/>
            <person name="Cowie A."/>
            <person name="Davis R.W."/>
            <person name="Dreano S."/>
            <person name="Federspiel N.A."/>
            <person name="Fisher R.F."/>
            <person name="Gloux S."/>
            <person name="Godrie T."/>
            <person name="Goffeau A."/>
            <person name="Golding B."/>
            <person name="Gouzy J."/>
            <person name="Gurjal M."/>
            <person name="Hernandez-Lucas I."/>
            <person name="Hong A."/>
            <person name="Huizar L."/>
            <person name="Hyman R.W."/>
            <person name="Jones T."/>
            <person name="Kahn D."/>
            <person name="Kahn M.L."/>
            <person name="Kalman S."/>
            <person name="Keating D.H."/>
            <person name="Kiss E."/>
            <person name="Komp C."/>
            <person name="Lelaure V."/>
            <person name="Masuy D."/>
            <person name="Palm C."/>
            <person name="Peck M.C."/>
            <person name="Pohl T.M."/>
            <person name="Portetelle D."/>
            <person name="Purnelle B."/>
            <person name="Ramsperger U."/>
            <person name="Surzycki R."/>
            <person name="Thebault P."/>
            <person name="Vandenbol M."/>
            <person name="Vorhoelter F.J."/>
            <person name="Weidner S."/>
            <person name="Wells D.H."/>
            <person name="Wong K."/>
            <person name="Yeh K.-C."/>
            <person name="Batut J."/>
        </authorList>
    </citation>
    <scope>NUCLEOTIDE SEQUENCE [LARGE SCALE GENOMIC DNA]</scope>
    <source>
        <strain>1021</strain>
    </source>
</reference>
<feature type="chain" id="PRO_0000350360" description="Dual-specificity RNA methyltransferase RlmN">
    <location>
        <begin position="1"/>
        <end position="411"/>
    </location>
</feature>
<feature type="domain" description="Radical SAM core" evidence="2">
    <location>
        <begin position="130"/>
        <end position="379"/>
    </location>
</feature>
<feature type="active site" description="Proton acceptor" evidence="1">
    <location>
        <position position="124"/>
    </location>
</feature>
<feature type="active site" description="S-methylcysteine intermediate" evidence="1">
    <location>
        <position position="382"/>
    </location>
</feature>
<feature type="binding site" evidence="1">
    <location>
        <position position="144"/>
    </location>
    <ligand>
        <name>[4Fe-4S] cluster</name>
        <dbReference type="ChEBI" id="CHEBI:49883"/>
        <note>4Fe-4S-S-AdoMet</note>
    </ligand>
</feature>
<feature type="binding site" evidence="1">
    <location>
        <position position="148"/>
    </location>
    <ligand>
        <name>[4Fe-4S] cluster</name>
        <dbReference type="ChEBI" id="CHEBI:49883"/>
        <note>4Fe-4S-S-AdoMet</note>
    </ligand>
</feature>
<feature type="binding site" evidence="1">
    <location>
        <position position="151"/>
    </location>
    <ligand>
        <name>[4Fe-4S] cluster</name>
        <dbReference type="ChEBI" id="CHEBI:49883"/>
        <note>4Fe-4S-S-AdoMet</note>
    </ligand>
</feature>
<feature type="binding site" evidence="1">
    <location>
        <begin position="208"/>
        <end position="209"/>
    </location>
    <ligand>
        <name>S-adenosyl-L-methionine</name>
        <dbReference type="ChEBI" id="CHEBI:59789"/>
    </ligand>
</feature>
<feature type="binding site" evidence="1">
    <location>
        <position position="240"/>
    </location>
    <ligand>
        <name>S-adenosyl-L-methionine</name>
        <dbReference type="ChEBI" id="CHEBI:59789"/>
    </ligand>
</feature>
<feature type="binding site" evidence="1">
    <location>
        <begin position="262"/>
        <end position="264"/>
    </location>
    <ligand>
        <name>S-adenosyl-L-methionine</name>
        <dbReference type="ChEBI" id="CHEBI:59789"/>
    </ligand>
</feature>
<feature type="binding site" evidence="1">
    <location>
        <position position="339"/>
    </location>
    <ligand>
        <name>S-adenosyl-L-methionine</name>
        <dbReference type="ChEBI" id="CHEBI:59789"/>
    </ligand>
</feature>
<feature type="disulfide bond" description="(transient)" evidence="1">
    <location>
        <begin position="137"/>
        <end position="382"/>
    </location>
</feature>
<sequence length="411" mass="46166">MAATEILNRADIVKAPQVRLAPQPEKPSLIGLLRDDIAKLLAEKGVPERQVKMRVSQLWHWLYVRGVSDFDEMSNVSKDMREMLKEHFTIARPDIVEEQVSGDGTRKWLLRFPPRGAGRPVEIETVYIPEEGRGTLCISSQVGCTLTCSFCHTGTQKLVRNLTAEEILSQLLLARDRLGDFPERDTPQGAIVPAEGRKITNIVMMGMGEPLYNFENVKTALLIASDGDGLSLSKRRITLSTSGIVPEIYRTGEEIGVMLAISLHAVRDDLRDMLVPINKKYPLKQLMEACRAYPGLSNARRITFEYVMLKDVNDSLEDAKELVKLLKGIPAKINLIPFNPWPGTNYQCSDWEQIEKFADFINQAGYASPIRTPRGRDILAACGQLKSESERMRKVDRLAFEAMMIANHGED</sequence>
<name>RLMN_RHIME</name>
<gene>
    <name evidence="1" type="primary">rlmN</name>
    <name type="ordered locus">R03214</name>
    <name type="ORF">SMc03831</name>
</gene>
<organism>
    <name type="scientific">Rhizobium meliloti (strain 1021)</name>
    <name type="common">Ensifer meliloti</name>
    <name type="synonym">Sinorhizobium meliloti</name>
    <dbReference type="NCBI Taxonomy" id="266834"/>
    <lineage>
        <taxon>Bacteria</taxon>
        <taxon>Pseudomonadati</taxon>
        <taxon>Pseudomonadota</taxon>
        <taxon>Alphaproteobacteria</taxon>
        <taxon>Hyphomicrobiales</taxon>
        <taxon>Rhizobiaceae</taxon>
        <taxon>Sinorhizobium/Ensifer group</taxon>
        <taxon>Sinorhizobium</taxon>
    </lineage>
</organism>
<protein>
    <recommendedName>
        <fullName evidence="1">Dual-specificity RNA methyltransferase RlmN</fullName>
        <ecNumber evidence="1">2.1.1.192</ecNumber>
    </recommendedName>
    <alternativeName>
        <fullName evidence="1">23S rRNA (adenine(2503)-C(2))-methyltransferase</fullName>
    </alternativeName>
    <alternativeName>
        <fullName evidence="1">23S rRNA m2A2503 methyltransferase</fullName>
    </alternativeName>
    <alternativeName>
        <fullName evidence="1">Ribosomal RNA large subunit methyltransferase N</fullName>
    </alternativeName>
    <alternativeName>
        <fullName evidence="1">tRNA (adenine(37)-C(2))-methyltransferase</fullName>
    </alternativeName>
    <alternativeName>
        <fullName evidence="1">tRNA m2A37 methyltransferase</fullName>
    </alternativeName>
</protein>
<accession>Q92L68</accession>
<dbReference type="EC" id="2.1.1.192" evidence="1"/>
<dbReference type="EMBL" id="AL591688">
    <property type="protein sequence ID" value="CAC47793.1"/>
    <property type="molecule type" value="Genomic_DNA"/>
</dbReference>
<dbReference type="RefSeq" id="NP_387320.1">
    <property type="nucleotide sequence ID" value="NC_003047.1"/>
</dbReference>
<dbReference type="RefSeq" id="WP_010970499.1">
    <property type="nucleotide sequence ID" value="NC_003047.1"/>
</dbReference>
<dbReference type="SMR" id="Q92L68"/>
<dbReference type="EnsemblBacteria" id="CAC47793">
    <property type="protein sequence ID" value="CAC47793"/>
    <property type="gene ID" value="SMc03831"/>
</dbReference>
<dbReference type="KEGG" id="sme:SMc03831"/>
<dbReference type="PATRIC" id="fig|266834.11.peg.4766"/>
<dbReference type="eggNOG" id="COG0820">
    <property type="taxonomic scope" value="Bacteria"/>
</dbReference>
<dbReference type="HOGENOM" id="CLU_029101_2_0_5"/>
<dbReference type="OrthoDB" id="9793973at2"/>
<dbReference type="Proteomes" id="UP000001976">
    <property type="component" value="Chromosome"/>
</dbReference>
<dbReference type="GO" id="GO:0005737">
    <property type="term" value="C:cytoplasm"/>
    <property type="evidence" value="ECO:0007669"/>
    <property type="project" value="UniProtKB-SubCell"/>
</dbReference>
<dbReference type="GO" id="GO:0051539">
    <property type="term" value="F:4 iron, 4 sulfur cluster binding"/>
    <property type="evidence" value="ECO:0007669"/>
    <property type="project" value="UniProtKB-UniRule"/>
</dbReference>
<dbReference type="GO" id="GO:0046872">
    <property type="term" value="F:metal ion binding"/>
    <property type="evidence" value="ECO:0007669"/>
    <property type="project" value="UniProtKB-KW"/>
</dbReference>
<dbReference type="GO" id="GO:0070040">
    <property type="term" value="F:rRNA (adenine(2503)-C2-)-methyltransferase activity"/>
    <property type="evidence" value="ECO:0007669"/>
    <property type="project" value="UniProtKB-UniRule"/>
</dbReference>
<dbReference type="GO" id="GO:0019843">
    <property type="term" value="F:rRNA binding"/>
    <property type="evidence" value="ECO:0007669"/>
    <property type="project" value="UniProtKB-UniRule"/>
</dbReference>
<dbReference type="GO" id="GO:0002935">
    <property type="term" value="F:tRNA (adenine(37)-C2)-methyltransferase activity"/>
    <property type="evidence" value="ECO:0007669"/>
    <property type="project" value="UniProtKB-UniRule"/>
</dbReference>
<dbReference type="GO" id="GO:0000049">
    <property type="term" value="F:tRNA binding"/>
    <property type="evidence" value="ECO:0007669"/>
    <property type="project" value="UniProtKB-UniRule"/>
</dbReference>
<dbReference type="GO" id="GO:0070475">
    <property type="term" value="P:rRNA base methylation"/>
    <property type="evidence" value="ECO:0007669"/>
    <property type="project" value="UniProtKB-UniRule"/>
</dbReference>
<dbReference type="GO" id="GO:0030488">
    <property type="term" value="P:tRNA methylation"/>
    <property type="evidence" value="ECO:0007669"/>
    <property type="project" value="UniProtKB-UniRule"/>
</dbReference>
<dbReference type="CDD" id="cd01335">
    <property type="entry name" value="Radical_SAM"/>
    <property type="match status" value="1"/>
</dbReference>
<dbReference type="FunFam" id="3.20.20.70:FF:000008">
    <property type="entry name" value="Dual-specificity RNA methyltransferase RlmN"/>
    <property type="match status" value="1"/>
</dbReference>
<dbReference type="Gene3D" id="1.10.150.530">
    <property type="match status" value="1"/>
</dbReference>
<dbReference type="Gene3D" id="3.20.20.70">
    <property type="entry name" value="Aldolase class I"/>
    <property type="match status" value="1"/>
</dbReference>
<dbReference type="HAMAP" id="MF_01849">
    <property type="entry name" value="RNA_methyltr_RlmN"/>
    <property type="match status" value="1"/>
</dbReference>
<dbReference type="InterPro" id="IPR013785">
    <property type="entry name" value="Aldolase_TIM"/>
</dbReference>
<dbReference type="InterPro" id="IPR040072">
    <property type="entry name" value="Methyltransferase_A"/>
</dbReference>
<dbReference type="InterPro" id="IPR048641">
    <property type="entry name" value="RlmN_N"/>
</dbReference>
<dbReference type="InterPro" id="IPR027492">
    <property type="entry name" value="RNA_MTrfase_RlmN"/>
</dbReference>
<dbReference type="InterPro" id="IPR004383">
    <property type="entry name" value="rRNA_lsu_MTrfase_RlmN/Cfr"/>
</dbReference>
<dbReference type="InterPro" id="IPR007197">
    <property type="entry name" value="rSAM"/>
</dbReference>
<dbReference type="NCBIfam" id="TIGR00048">
    <property type="entry name" value="rRNA_mod_RlmN"/>
    <property type="match status" value="1"/>
</dbReference>
<dbReference type="PANTHER" id="PTHR30544">
    <property type="entry name" value="23S RRNA METHYLTRANSFERASE"/>
    <property type="match status" value="1"/>
</dbReference>
<dbReference type="PANTHER" id="PTHR30544:SF5">
    <property type="entry name" value="RADICAL SAM CORE DOMAIN-CONTAINING PROTEIN"/>
    <property type="match status" value="1"/>
</dbReference>
<dbReference type="Pfam" id="PF04055">
    <property type="entry name" value="Radical_SAM"/>
    <property type="match status" value="1"/>
</dbReference>
<dbReference type="Pfam" id="PF21016">
    <property type="entry name" value="RlmN_N"/>
    <property type="match status" value="1"/>
</dbReference>
<dbReference type="PIRSF" id="PIRSF006004">
    <property type="entry name" value="CHP00048"/>
    <property type="match status" value="1"/>
</dbReference>
<dbReference type="SFLD" id="SFLDF00275">
    <property type="entry name" value="adenosine_C2_methyltransferase"/>
    <property type="match status" value="1"/>
</dbReference>
<dbReference type="SFLD" id="SFLDS00029">
    <property type="entry name" value="Radical_SAM"/>
    <property type="match status" value="1"/>
</dbReference>
<dbReference type="SUPFAM" id="SSF102114">
    <property type="entry name" value="Radical SAM enzymes"/>
    <property type="match status" value="1"/>
</dbReference>
<dbReference type="PROSITE" id="PS51918">
    <property type="entry name" value="RADICAL_SAM"/>
    <property type="match status" value="1"/>
</dbReference>